<proteinExistence type="evidence at transcript level"/>
<keyword id="KW-0007">Acetylation</keyword>
<keyword id="KW-0963">Cytoplasm</keyword>
<keyword id="KW-0539">Nucleus</keyword>
<keyword id="KW-0597">Phosphoprotein</keyword>
<keyword id="KW-1185">Reference proteome</keyword>
<keyword id="KW-0694">RNA-binding</keyword>
<keyword id="KW-0813">Transport</keyword>
<gene>
    <name type="primary">Snupn</name>
    <name type="synonym">Rnut1</name>
</gene>
<reference key="1">
    <citation type="journal article" date="2005" name="Science">
        <title>The transcriptional landscape of the mammalian genome.</title>
        <authorList>
            <person name="Carninci P."/>
            <person name="Kasukawa T."/>
            <person name="Katayama S."/>
            <person name="Gough J."/>
            <person name="Frith M.C."/>
            <person name="Maeda N."/>
            <person name="Oyama R."/>
            <person name="Ravasi T."/>
            <person name="Lenhard B."/>
            <person name="Wells C."/>
            <person name="Kodzius R."/>
            <person name="Shimokawa K."/>
            <person name="Bajic V.B."/>
            <person name="Brenner S.E."/>
            <person name="Batalov S."/>
            <person name="Forrest A.R."/>
            <person name="Zavolan M."/>
            <person name="Davis M.J."/>
            <person name="Wilming L.G."/>
            <person name="Aidinis V."/>
            <person name="Allen J.E."/>
            <person name="Ambesi-Impiombato A."/>
            <person name="Apweiler R."/>
            <person name="Aturaliya R.N."/>
            <person name="Bailey T.L."/>
            <person name="Bansal M."/>
            <person name="Baxter L."/>
            <person name="Beisel K.W."/>
            <person name="Bersano T."/>
            <person name="Bono H."/>
            <person name="Chalk A.M."/>
            <person name="Chiu K.P."/>
            <person name="Choudhary V."/>
            <person name="Christoffels A."/>
            <person name="Clutterbuck D.R."/>
            <person name="Crowe M.L."/>
            <person name="Dalla E."/>
            <person name="Dalrymple B.P."/>
            <person name="de Bono B."/>
            <person name="Della Gatta G."/>
            <person name="di Bernardo D."/>
            <person name="Down T."/>
            <person name="Engstrom P."/>
            <person name="Fagiolini M."/>
            <person name="Faulkner G."/>
            <person name="Fletcher C.F."/>
            <person name="Fukushima T."/>
            <person name="Furuno M."/>
            <person name="Futaki S."/>
            <person name="Gariboldi M."/>
            <person name="Georgii-Hemming P."/>
            <person name="Gingeras T.R."/>
            <person name="Gojobori T."/>
            <person name="Green R.E."/>
            <person name="Gustincich S."/>
            <person name="Harbers M."/>
            <person name="Hayashi Y."/>
            <person name="Hensch T.K."/>
            <person name="Hirokawa N."/>
            <person name="Hill D."/>
            <person name="Huminiecki L."/>
            <person name="Iacono M."/>
            <person name="Ikeo K."/>
            <person name="Iwama A."/>
            <person name="Ishikawa T."/>
            <person name="Jakt M."/>
            <person name="Kanapin A."/>
            <person name="Katoh M."/>
            <person name="Kawasawa Y."/>
            <person name="Kelso J."/>
            <person name="Kitamura H."/>
            <person name="Kitano H."/>
            <person name="Kollias G."/>
            <person name="Krishnan S.P."/>
            <person name="Kruger A."/>
            <person name="Kummerfeld S.K."/>
            <person name="Kurochkin I.V."/>
            <person name="Lareau L.F."/>
            <person name="Lazarevic D."/>
            <person name="Lipovich L."/>
            <person name="Liu J."/>
            <person name="Liuni S."/>
            <person name="McWilliam S."/>
            <person name="Madan Babu M."/>
            <person name="Madera M."/>
            <person name="Marchionni L."/>
            <person name="Matsuda H."/>
            <person name="Matsuzawa S."/>
            <person name="Miki H."/>
            <person name="Mignone F."/>
            <person name="Miyake S."/>
            <person name="Morris K."/>
            <person name="Mottagui-Tabar S."/>
            <person name="Mulder N."/>
            <person name="Nakano N."/>
            <person name="Nakauchi H."/>
            <person name="Ng P."/>
            <person name="Nilsson R."/>
            <person name="Nishiguchi S."/>
            <person name="Nishikawa S."/>
            <person name="Nori F."/>
            <person name="Ohara O."/>
            <person name="Okazaki Y."/>
            <person name="Orlando V."/>
            <person name="Pang K.C."/>
            <person name="Pavan W.J."/>
            <person name="Pavesi G."/>
            <person name="Pesole G."/>
            <person name="Petrovsky N."/>
            <person name="Piazza S."/>
            <person name="Reed J."/>
            <person name="Reid J.F."/>
            <person name="Ring B.Z."/>
            <person name="Ringwald M."/>
            <person name="Rost B."/>
            <person name="Ruan Y."/>
            <person name="Salzberg S.L."/>
            <person name="Sandelin A."/>
            <person name="Schneider C."/>
            <person name="Schoenbach C."/>
            <person name="Sekiguchi K."/>
            <person name="Semple C.A."/>
            <person name="Seno S."/>
            <person name="Sessa L."/>
            <person name="Sheng Y."/>
            <person name="Shibata Y."/>
            <person name="Shimada H."/>
            <person name="Shimada K."/>
            <person name="Silva D."/>
            <person name="Sinclair B."/>
            <person name="Sperling S."/>
            <person name="Stupka E."/>
            <person name="Sugiura K."/>
            <person name="Sultana R."/>
            <person name="Takenaka Y."/>
            <person name="Taki K."/>
            <person name="Tammoja K."/>
            <person name="Tan S.L."/>
            <person name="Tang S."/>
            <person name="Taylor M.S."/>
            <person name="Tegner J."/>
            <person name="Teichmann S.A."/>
            <person name="Ueda H.R."/>
            <person name="van Nimwegen E."/>
            <person name="Verardo R."/>
            <person name="Wei C.L."/>
            <person name="Yagi K."/>
            <person name="Yamanishi H."/>
            <person name="Zabarovsky E."/>
            <person name="Zhu S."/>
            <person name="Zimmer A."/>
            <person name="Hide W."/>
            <person name="Bult C."/>
            <person name="Grimmond S.M."/>
            <person name="Teasdale R.D."/>
            <person name="Liu E.T."/>
            <person name="Brusic V."/>
            <person name="Quackenbush J."/>
            <person name="Wahlestedt C."/>
            <person name="Mattick J.S."/>
            <person name="Hume D.A."/>
            <person name="Kai C."/>
            <person name="Sasaki D."/>
            <person name="Tomaru Y."/>
            <person name="Fukuda S."/>
            <person name="Kanamori-Katayama M."/>
            <person name="Suzuki M."/>
            <person name="Aoki J."/>
            <person name="Arakawa T."/>
            <person name="Iida J."/>
            <person name="Imamura K."/>
            <person name="Itoh M."/>
            <person name="Kato T."/>
            <person name="Kawaji H."/>
            <person name="Kawagashira N."/>
            <person name="Kawashima T."/>
            <person name="Kojima M."/>
            <person name="Kondo S."/>
            <person name="Konno H."/>
            <person name="Nakano K."/>
            <person name="Ninomiya N."/>
            <person name="Nishio T."/>
            <person name="Okada M."/>
            <person name="Plessy C."/>
            <person name="Shibata K."/>
            <person name="Shiraki T."/>
            <person name="Suzuki S."/>
            <person name="Tagami M."/>
            <person name="Waki K."/>
            <person name="Watahiki A."/>
            <person name="Okamura-Oho Y."/>
            <person name="Suzuki H."/>
            <person name="Kawai J."/>
            <person name="Hayashizaki Y."/>
        </authorList>
    </citation>
    <scope>NUCLEOTIDE SEQUENCE [LARGE SCALE MRNA]</scope>
    <source>
        <strain>NOD</strain>
        <tissue>Dendritic cell</tissue>
    </source>
</reference>
<reference key="2">
    <citation type="journal article" date="2004" name="Genome Res.">
        <title>The status, quality, and expansion of the NIH full-length cDNA project: the Mammalian Gene Collection (MGC).</title>
        <authorList>
            <consortium name="The MGC Project Team"/>
        </authorList>
    </citation>
    <scope>NUCLEOTIDE SEQUENCE [LARGE SCALE MRNA]</scope>
    <source>
        <tissue>Brain</tissue>
        <tissue>Pituitary</tissue>
    </source>
</reference>
<feature type="chain" id="PRO_0000191072" description="Snurportin-1">
    <location>
        <begin position="1"/>
        <end position="358"/>
    </location>
</feature>
<feature type="domain" description="IBB" evidence="2">
    <location>
        <begin position="11"/>
        <end position="73"/>
    </location>
</feature>
<feature type="region of interest" description="Necessary for interaction with XPO1" evidence="1">
    <location>
        <begin position="1"/>
        <end position="160"/>
    </location>
</feature>
<feature type="region of interest" description="Necessary for interaction with KPNB1 and m3G-cap U1 and U5 snRNP import receptor activity" evidence="1">
    <location>
        <begin position="1"/>
        <end position="65"/>
    </location>
</feature>
<feature type="region of interest" description="Disordered" evidence="3">
    <location>
        <begin position="1"/>
        <end position="26"/>
    </location>
</feature>
<feature type="region of interest" description="Disordered" evidence="3">
    <location>
        <begin position="69"/>
        <end position="90"/>
    </location>
</feature>
<feature type="region of interest" description="Interaction with m3G-cap structure" evidence="1">
    <location>
        <begin position="128"/>
        <end position="130"/>
    </location>
</feature>
<feature type="region of interest" description="Necessary for binding to the m3G-cap structure" evidence="1">
    <location>
        <begin position="210"/>
        <end position="329"/>
    </location>
</feature>
<feature type="region of interest" description="Disordered" evidence="3">
    <location>
        <begin position="315"/>
        <end position="358"/>
    </location>
</feature>
<feature type="compositionally biased region" description="Polar residues" evidence="3">
    <location>
        <begin position="7"/>
        <end position="22"/>
    </location>
</feature>
<feature type="compositionally biased region" description="Basic and acidic residues" evidence="3">
    <location>
        <begin position="315"/>
        <end position="341"/>
    </location>
</feature>
<feature type="compositionally biased region" description="Polar residues" evidence="3">
    <location>
        <begin position="349"/>
        <end position="358"/>
    </location>
</feature>
<feature type="site" description="Interaction with m3G-cap structure" evidence="1">
    <location>
        <position position="106"/>
    </location>
</feature>
<feature type="site" description="Interaction with m3G-cap structure" evidence="1">
    <location>
        <position position="145"/>
    </location>
</feature>
<feature type="site" description="Interaction with m3G-cap structure" evidence="1">
    <location>
        <position position="278"/>
    </location>
</feature>
<feature type="modified residue" description="N-acetylmethionine" evidence="1">
    <location>
        <position position="1"/>
    </location>
</feature>
<feature type="modified residue" description="Phosphoserine" evidence="1">
    <location>
        <position position="75"/>
    </location>
</feature>
<feature type="modified residue" description="Phosphoserine" evidence="1">
    <location>
        <position position="351"/>
    </location>
</feature>
<protein>
    <recommendedName>
        <fullName>Snurportin-1</fullName>
    </recommendedName>
    <alternativeName>
        <fullName>RNA U transporter 1</fullName>
    </alternativeName>
</protein>
<accession>Q80W37</accession>
<sequence>MEELSQALASSFSVSQELNSTAAPHPRLCQYKSKYSSLEQSERRRQLLELQKSKRLDYVNHARRLAEDDWTGMESGEEENKKDEEEMDIDPSKKLPKRYANQLMLSEWLIDVPSDLGQEWIVVVCPVGKRALIVASRGSTSAYTKSGYCVNRFSSLLPGGNRRNSTTAKDYTILDCIYSEVNQTYYVLDVMCWRGHPFYDCQTDFRFYWMHSKLPEEEGLGEKTKINPFKFVGLKNFPCTPESLCEVLSMDFPFEVDGLLFYHKQTHYSPGSTPLVGWLRPYMVSDILGVAVPAGPLTTKPEYAGHQLQQIIEHKRSQEDTKEKLTHKASENGHYELEHLSTPKLRNPPHSSESLMDN</sequence>
<evidence type="ECO:0000250" key="1">
    <source>
        <dbReference type="UniProtKB" id="O95149"/>
    </source>
</evidence>
<evidence type="ECO:0000255" key="2">
    <source>
        <dbReference type="PROSITE-ProRule" id="PRU00561"/>
    </source>
</evidence>
<evidence type="ECO:0000256" key="3">
    <source>
        <dbReference type="SAM" id="MobiDB-lite"/>
    </source>
</evidence>
<evidence type="ECO:0000305" key="4"/>
<name>SPN1_MOUSE</name>
<organism>
    <name type="scientific">Mus musculus</name>
    <name type="common">Mouse</name>
    <dbReference type="NCBI Taxonomy" id="10090"/>
    <lineage>
        <taxon>Eukaryota</taxon>
        <taxon>Metazoa</taxon>
        <taxon>Chordata</taxon>
        <taxon>Craniata</taxon>
        <taxon>Vertebrata</taxon>
        <taxon>Euteleostomi</taxon>
        <taxon>Mammalia</taxon>
        <taxon>Eutheria</taxon>
        <taxon>Euarchontoglires</taxon>
        <taxon>Glires</taxon>
        <taxon>Rodentia</taxon>
        <taxon>Myomorpha</taxon>
        <taxon>Muroidea</taxon>
        <taxon>Muridae</taxon>
        <taxon>Murinae</taxon>
        <taxon>Mus</taxon>
        <taxon>Mus</taxon>
    </lineage>
</organism>
<comment type="function">
    <text evidence="1">Functions as an U snRNP-specific nuclear import adapter. Involved in the trimethylguanosine (m3G)-cap-dependent nuclear import of U snRNPs. Binds specifically to the terminal m3G-cap U snRNAs.</text>
</comment>
<comment type="subunit">
    <text evidence="1">Component of an import snRNP complex composed of KPNB1, SNUPN, SMN1 and ZNF259. Component of a nuclear export receptor complex composed of KPNB1, Ran, SNUPN and XPO1. Found in a trimeric export complex with SNUPN, Ran and XPO1. Interacts (via IBB domain) with KPNB1; the interaction is direct. Interacts with DDX20, IPO7, SMN1, SNRPB and XPO1. Interacts directly with XPO1. Its interaction with XPO1 and binding to m3G-cap U snRNPs appears to be mutually exclusive. Can form homomers.</text>
</comment>
<comment type="subcellular location">
    <subcellularLocation>
        <location evidence="1">Nucleus</location>
    </subcellularLocation>
    <subcellularLocation>
        <location evidence="1">Cytoplasm</location>
    </subcellularLocation>
    <text evidence="1">Nucleoplasmic shuttling protein. Its nuclear import involves the nucleocytoplasmic transport receptor importin beta. It is re-exported to the cytoplasm by the XPO1-dependent nuclear export receptor pathway.</text>
</comment>
<comment type="similarity">
    <text evidence="4">Belongs to the snurportin family.</text>
</comment>
<dbReference type="EMBL" id="AK155315">
    <property type="protein sequence ID" value="BAE33185.1"/>
    <property type="molecule type" value="mRNA"/>
</dbReference>
<dbReference type="EMBL" id="BC049638">
    <property type="protein sequence ID" value="AAH49638.1"/>
    <property type="molecule type" value="mRNA"/>
</dbReference>
<dbReference type="EMBL" id="BC061258">
    <property type="protein sequence ID" value="AAH61258.1"/>
    <property type="molecule type" value="mRNA"/>
</dbReference>
<dbReference type="CCDS" id="CCDS23214.1"/>
<dbReference type="RefSeq" id="NP_848461.1">
    <property type="nucleotide sequence ID" value="NM_178374.4"/>
</dbReference>
<dbReference type="RefSeq" id="XP_011241086.1">
    <property type="nucleotide sequence ID" value="XM_011242784.4"/>
</dbReference>
<dbReference type="SMR" id="Q80W37"/>
<dbReference type="BioGRID" id="211191">
    <property type="interactions" value="4"/>
</dbReference>
<dbReference type="ComplexPortal" id="CPX-1111">
    <property type="entry name" value="Importin complex, Snurportin variant"/>
</dbReference>
<dbReference type="FunCoup" id="Q80W37">
    <property type="interactions" value="2532"/>
</dbReference>
<dbReference type="STRING" id="10090.ENSMUSP00000067200"/>
<dbReference type="iPTMnet" id="Q80W37"/>
<dbReference type="PhosphoSitePlus" id="Q80W37"/>
<dbReference type="SwissPalm" id="Q80W37"/>
<dbReference type="PaxDb" id="10090-ENSMUSP00000067200"/>
<dbReference type="PeptideAtlas" id="Q80W37"/>
<dbReference type="ProteomicsDB" id="258726"/>
<dbReference type="Pumba" id="Q80W37"/>
<dbReference type="Antibodypedia" id="27339">
    <property type="antibodies" value="199 antibodies from 26 providers"/>
</dbReference>
<dbReference type="DNASU" id="66069"/>
<dbReference type="Ensembl" id="ENSMUST00000068856.5">
    <property type="protein sequence ID" value="ENSMUSP00000067200.5"/>
    <property type="gene ID" value="ENSMUSG00000055334.5"/>
</dbReference>
<dbReference type="GeneID" id="66069"/>
<dbReference type="KEGG" id="mmu:66069"/>
<dbReference type="UCSC" id="uc009ptr.1">
    <property type="organism name" value="mouse"/>
</dbReference>
<dbReference type="AGR" id="MGI:1913319"/>
<dbReference type="CTD" id="10073"/>
<dbReference type="MGI" id="MGI:1913319">
    <property type="gene designation" value="Snupn"/>
</dbReference>
<dbReference type="VEuPathDB" id="HostDB:ENSMUSG00000055334"/>
<dbReference type="eggNOG" id="KOG3132">
    <property type="taxonomic scope" value="Eukaryota"/>
</dbReference>
<dbReference type="GeneTree" id="ENSGT00510000047494"/>
<dbReference type="HOGENOM" id="CLU_056809_0_0_1"/>
<dbReference type="InParanoid" id="Q80W37"/>
<dbReference type="OMA" id="ENWIMVP"/>
<dbReference type="OrthoDB" id="10003593at2759"/>
<dbReference type="PhylomeDB" id="Q80W37"/>
<dbReference type="TreeFam" id="TF313108"/>
<dbReference type="Reactome" id="R-MMU-191859">
    <property type="pathway name" value="snRNP Assembly"/>
</dbReference>
<dbReference type="BioGRID-ORCS" id="66069">
    <property type="hits" value="23 hits in 79 CRISPR screens"/>
</dbReference>
<dbReference type="ChiTaRS" id="Snupn">
    <property type="organism name" value="mouse"/>
</dbReference>
<dbReference type="PRO" id="PR:Q80W37"/>
<dbReference type="Proteomes" id="UP000000589">
    <property type="component" value="Chromosome 9"/>
</dbReference>
<dbReference type="RNAct" id="Q80W37">
    <property type="molecule type" value="protein"/>
</dbReference>
<dbReference type="Bgee" id="ENSMUSG00000055334">
    <property type="expression patterns" value="Expressed in cleaving embryo and 229 other cell types or tissues"/>
</dbReference>
<dbReference type="GO" id="GO:0005829">
    <property type="term" value="C:cytosol"/>
    <property type="evidence" value="ECO:0000303"/>
    <property type="project" value="ComplexPortal"/>
</dbReference>
<dbReference type="GO" id="GO:0042564">
    <property type="term" value="C:NLS-dependent protein nuclear import complex"/>
    <property type="evidence" value="ECO:0000266"/>
    <property type="project" value="ComplexPortal"/>
</dbReference>
<dbReference type="GO" id="GO:0005654">
    <property type="term" value="C:nucleoplasm"/>
    <property type="evidence" value="ECO:0000266"/>
    <property type="project" value="ComplexPortal"/>
</dbReference>
<dbReference type="GO" id="GO:0005634">
    <property type="term" value="C:nucleus"/>
    <property type="evidence" value="ECO:0000250"/>
    <property type="project" value="UniProtKB"/>
</dbReference>
<dbReference type="GO" id="GO:0005886">
    <property type="term" value="C:plasma membrane"/>
    <property type="evidence" value="ECO:0007669"/>
    <property type="project" value="Ensembl"/>
</dbReference>
<dbReference type="GO" id="GO:0061608">
    <property type="term" value="F:nuclear import signal receptor activity"/>
    <property type="evidence" value="ECO:0007669"/>
    <property type="project" value="InterPro"/>
</dbReference>
<dbReference type="GO" id="GO:0003723">
    <property type="term" value="F:RNA binding"/>
    <property type="evidence" value="ECO:0007669"/>
    <property type="project" value="UniProtKB-KW"/>
</dbReference>
<dbReference type="GO" id="GO:0007010">
    <property type="term" value="P:cytoskeleton organization"/>
    <property type="evidence" value="ECO:0000250"/>
    <property type="project" value="UniProtKB"/>
</dbReference>
<dbReference type="GO" id="GO:0051259">
    <property type="term" value="P:protein complex oligomerization"/>
    <property type="evidence" value="ECO:0000250"/>
    <property type="project" value="UniProtKB"/>
</dbReference>
<dbReference type="GO" id="GO:0006606">
    <property type="term" value="P:protein import into nucleus"/>
    <property type="evidence" value="ECO:0007669"/>
    <property type="project" value="InterPro"/>
</dbReference>
<dbReference type="GO" id="GO:0051262">
    <property type="term" value="P:protein tetramerization"/>
    <property type="evidence" value="ECO:0000250"/>
    <property type="project" value="UniProtKB"/>
</dbReference>
<dbReference type="GO" id="GO:0006404">
    <property type="term" value="P:RNA import into nucleus"/>
    <property type="evidence" value="ECO:0000250"/>
    <property type="project" value="UniProtKB"/>
</dbReference>
<dbReference type="GO" id="GO:0061015">
    <property type="term" value="P:snRNA import into nucleus"/>
    <property type="evidence" value="ECO:0007669"/>
    <property type="project" value="InterPro"/>
</dbReference>
<dbReference type="CDD" id="cd09232">
    <property type="entry name" value="Snurportin-1_C"/>
    <property type="match status" value="1"/>
</dbReference>
<dbReference type="FunFam" id="3.30.470.30:FF:000010">
    <property type="entry name" value="Snurportin-1"/>
    <property type="match status" value="1"/>
</dbReference>
<dbReference type="Gene3D" id="3.30.470.30">
    <property type="entry name" value="DNA ligase/mRNA capping enzyme"/>
    <property type="match status" value="1"/>
</dbReference>
<dbReference type="InterPro" id="IPR002652">
    <property type="entry name" value="Importin-a_IBB"/>
</dbReference>
<dbReference type="InterPro" id="IPR017336">
    <property type="entry name" value="Snurportin-1"/>
</dbReference>
<dbReference type="InterPro" id="IPR024721">
    <property type="entry name" value="Snurportin-1_N"/>
</dbReference>
<dbReference type="InterPro" id="IPR047857">
    <property type="entry name" value="Snurportin1_C"/>
</dbReference>
<dbReference type="PANTHER" id="PTHR13403:SF6">
    <property type="entry name" value="SNURPORTIN-1"/>
    <property type="match status" value="1"/>
</dbReference>
<dbReference type="PANTHER" id="PTHR13403">
    <property type="entry name" value="SNURPORTIN1 RNUT1 PROTEIN RNA, U TRANSPORTER 1"/>
    <property type="match status" value="1"/>
</dbReference>
<dbReference type="Pfam" id="PF11538">
    <property type="entry name" value="Snurportin1"/>
    <property type="match status" value="1"/>
</dbReference>
<dbReference type="Pfam" id="PF21974">
    <property type="entry name" value="SPN1_m3Gcap_bd"/>
    <property type="match status" value="1"/>
</dbReference>
<dbReference type="PIRSF" id="PIRSF037955">
    <property type="entry name" value="Snurportin-1"/>
    <property type="match status" value="1"/>
</dbReference>
<dbReference type="SUPFAM" id="SSF56091">
    <property type="entry name" value="DNA ligase/mRNA capping enzyme, catalytic domain"/>
    <property type="match status" value="1"/>
</dbReference>
<dbReference type="PROSITE" id="PS51214">
    <property type="entry name" value="IBB"/>
    <property type="match status" value="1"/>
</dbReference>